<evidence type="ECO:0000255" key="1">
    <source>
        <dbReference type="HAMAP-Rule" id="MF_00097"/>
    </source>
</evidence>
<gene>
    <name evidence="1" type="primary">thiE</name>
    <name type="ordered locus">LMOf2365_0336</name>
</gene>
<feature type="chain" id="PRO_0000157022" description="Thiamine-phosphate synthase">
    <location>
        <begin position="1"/>
        <end position="214"/>
    </location>
</feature>
<feature type="binding site" evidence="1">
    <location>
        <begin position="37"/>
        <end position="41"/>
    </location>
    <ligand>
        <name>4-amino-2-methyl-5-(diphosphooxymethyl)pyrimidine</name>
        <dbReference type="ChEBI" id="CHEBI:57841"/>
    </ligand>
</feature>
<feature type="binding site" evidence="1">
    <location>
        <position position="73"/>
    </location>
    <ligand>
        <name>4-amino-2-methyl-5-(diphosphooxymethyl)pyrimidine</name>
        <dbReference type="ChEBI" id="CHEBI:57841"/>
    </ligand>
</feature>
<feature type="binding site" evidence="1">
    <location>
        <position position="74"/>
    </location>
    <ligand>
        <name>Mg(2+)</name>
        <dbReference type="ChEBI" id="CHEBI:18420"/>
    </ligand>
</feature>
<feature type="binding site" evidence="1">
    <location>
        <position position="93"/>
    </location>
    <ligand>
        <name>Mg(2+)</name>
        <dbReference type="ChEBI" id="CHEBI:18420"/>
    </ligand>
</feature>
<feature type="binding site" evidence="1">
    <location>
        <position position="112"/>
    </location>
    <ligand>
        <name>4-amino-2-methyl-5-(diphosphooxymethyl)pyrimidine</name>
        <dbReference type="ChEBI" id="CHEBI:57841"/>
    </ligand>
</feature>
<feature type="binding site" evidence="1">
    <location>
        <begin position="139"/>
        <end position="141"/>
    </location>
    <ligand>
        <name>2-[(2R,5Z)-2-carboxy-4-methylthiazol-5(2H)-ylidene]ethyl phosphate</name>
        <dbReference type="ChEBI" id="CHEBI:62899"/>
    </ligand>
</feature>
<feature type="binding site" evidence="1">
    <location>
        <position position="142"/>
    </location>
    <ligand>
        <name>4-amino-2-methyl-5-(diphosphooxymethyl)pyrimidine</name>
        <dbReference type="ChEBI" id="CHEBI:57841"/>
    </ligand>
</feature>
<feature type="binding site" evidence="1">
    <location>
        <position position="171"/>
    </location>
    <ligand>
        <name>2-[(2R,5Z)-2-carboxy-4-methylthiazol-5(2H)-ylidene]ethyl phosphate</name>
        <dbReference type="ChEBI" id="CHEBI:62899"/>
    </ligand>
</feature>
<feature type="binding site" evidence="1">
    <location>
        <begin position="191"/>
        <end position="192"/>
    </location>
    <ligand>
        <name>2-[(2R,5Z)-2-carboxy-4-methylthiazol-5(2H)-ylidene]ethyl phosphate</name>
        <dbReference type="ChEBI" id="CHEBI:62899"/>
    </ligand>
</feature>
<keyword id="KW-0460">Magnesium</keyword>
<keyword id="KW-0479">Metal-binding</keyword>
<keyword id="KW-0784">Thiamine biosynthesis</keyword>
<keyword id="KW-0808">Transferase</keyword>
<name>THIE_LISMF</name>
<accession>Q723Y9</accession>
<dbReference type="EC" id="2.5.1.3" evidence="1"/>
<dbReference type="EMBL" id="AE017262">
    <property type="protein sequence ID" value="AAT03122.1"/>
    <property type="molecule type" value="Genomic_DNA"/>
</dbReference>
<dbReference type="RefSeq" id="WP_010958718.1">
    <property type="nucleotide sequence ID" value="NC_002973.6"/>
</dbReference>
<dbReference type="SMR" id="Q723Y9"/>
<dbReference type="KEGG" id="lmf:LMOf2365_0336"/>
<dbReference type="HOGENOM" id="CLU_018272_3_2_9"/>
<dbReference type="UniPathway" id="UPA00060">
    <property type="reaction ID" value="UER00141"/>
</dbReference>
<dbReference type="GO" id="GO:0005737">
    <property type="term" value="C:cytoplasm"/>
    <property type="evidence" value="ECO:0007669"/>
    <property type="project" value="TreeGrafter"/>
</dbReference>
<dbReference type="GO" id="GO:0000287">
    <property type="term" value="F:magnesium ion binding"/>
    <property type="evidence" value="ECO:0007669"/>
    <property type="project" value="UniProtKB-UniRule"/>
</dbReference>
<dbReference type="GO" id="GO:0004789">
    <property type="term" value="F:thiamine-phosphate diphosphorylase activity"/>
    <property type="evidence" value="ECO:0007669"/>
    <property type="project" value="UniProtKB-UniRule"/>
</dbReference>
<dbReference type="GO" id="GO:0009228">
    <property type="term" value="P:thiamine biosynthetic process"/>
    <property type="evidence" value="ECO:0007669"/>
    <property type="project" value="UniProtKB-KW"/>
</dbReference>
<dbReference type="GO" id="GO:0009229">
    <property type="term" value="P:thiamine diphosphate biosynthetic process"/>
    <property type="evidence" value="ECO:0007669"/>
    <property type="project" value="UniProtKB-UniRule"/>
</dbReference>
<dbReference type="CDD" id="cd00564">
    <property type="entry name" value="TMP_TenI"/>
    <property type="match status" value="1"/>
</dbReference>
<dbReference type="FunFam" id="3.20.20.70:FF:000096">
    <property type="entry name" value="Thiamine-phosphate synthase"/>
    <property type="match status" value="1"/>
</dbReference>
<dbReference type="Gene3D" id="3.20.20.70">
    <property type="entry name" value="Aldolase class I"/>
    <property type="match status" value="1"/>
</dbReference>
<dbReference type="HAMAP" id="MF_00097">
    <property type="entry name" value="TMP_synthase"/>
    <property type="match status" value="1"/>
</dbReference>
<dbReference type="InterPro" id="IPR013785">
    <property type="entry name" value="Aldolase_TIM"/>
</dbReference>
<dbReference type="InterPro" id="IPR036206">
    <property type="entry name" value="ThiamineP_synth_sf"/>
</dbReference>
<dbReference type="InterPro" id="IPR022998">
    <property type="entry name" value="ThiamineP_synth_TenI"/>
</dbReference>
<dbReference type="InterPro" id="IPR034291">
    <property type="entry name" value="TMP_synthase"/>
</dbReference>
<dbReference type="NCBIfam" id="TIGR00693">
    <property type="entry name" value="thiE"/>
    <property type="match status" value="1"/>
</dbReference>
<dbReference type="PANTHER" id="PTHR20857">
    <property type="entry name" value="THIAMINE-PHOSPHATE PYROPHOSPHORYLASE"/>
    <property type="match status" value="1"/>
</dbReference>
<dbReference type="PANTHER" id="PTHR20857:SF15">
    <property type="entry name" value="THIAMINE-PHOSPHATE SYNTHASE"/>
    <property type="match status" value="1"/>
</dbReference>
<dbReference type="Pfam" id="PF02581">
    <property type="entry name" value="TMP-TENI"/>
    <property type="match status" value="1"/>
</dbReference>
<dbReference type="SUPFAM" id="SSF51391">
    <property type="entry name" value="Thiamin phosphate synthase"/>
    <property type="match status" value="1"/>
</dbReference>
<organism>
    <name type="scientific">Listeria monocytogenes serotype 4b (strain F2365)</name>
    <dbReference type="NCBI Taxonomy" id="265669"/>
    <lineage>
        <taxon>Bacteria</taxon>
        <taxon>Bacillati</taxon>
        <taxon>Bacillota</taxon>
        <taxon>Bacilli</taxon>
        <taxon>Bacillales</taxon>
        <taxon>Listeriaceae</taxon>
        <taxon>Listeria</taxon>
    </lineage>
</organism>
<comment type="function">
    <text evidence="1">Condenses 4-methyl-5-(beta-hydroxyethyl)thiazole monophosphate (THZ-P) and 2-methyl-4-amino-5-hydroxymethyl pyrimidine pyrophosphate (HMP-PP) to form thiamine monophosphate (TMP).</text>
</comment>
<comment type="catalytic activity">
    <reaction evidence="1">
        <text>2-[(2R,5Z)-2-carboxy-4-methylthiazol-5(2H)-ylidene]ethyl phosphate + 4-amino-2-methyl-5-(diphosphooxymethyl)pyrimidine + 2 H(+) = thiamine phosphate + CO2 + diphosphate</text>
        <dbReference type="Rhea" id="RHEA:47844"/>
        <dbReference type="ChEBI" id="CHEBI:15378"/>
        <dbReference type="ChEBI" id="CHEBI:16526"/>
        <dbReference type="ChEBI" id="CHEBI:33019"/>
        <dbReference type="ChEBI" id="CHEBI:37575"/>
        <dbReference type="ChEBI" id="CHEBI:57841"/>
        <dbReference type="ChEBI" id="CHEBI:62899"/>
        <dbReference type="EC" id="2.5.1.3"/>
    </reaction>
</comment>
<comment type="catalytic activity">
    <reaction evidence="1">
        <text>2-(2-carboxy-4-methylthiazol-5-yl)ethyl phosphate + 4-amino-2-methyl-5-(diphosphooxymethyl)pyrimidine + 2 H(+) = thiamine phosphate + CO2 + diphosphate</text>
        <dbReference type="Rhea" id="RHEA:47848"/>
        <dbReference type="ChEBI" id="CHEBI:15378"/>
        <dbReference type="ChEBI" id="CHEBI:16526"/>
        <dbReference type="ChEBI" id="CHEBI:33019"/>
        <dbReference type="ChEBI" id="CHEBI:37575"/>
        <dbReference type="ChEBI" id="CHEBI:57841"/>
        <dbReference type="ChEBI" id="CHEBI:62890"/>
        <dbReference type="EC" id="2.5.1.3"/>
    </reaction>
</comment>
<comment type="catalytic activity">
    <reaction evidence="1">
        <text>4-methyl-5-(2-phosphooxyethyl)-thiazole + 4-amino-2-methyl-5-(diphosphooxymethyl)pyrimidine + H(+) = thiamine phosphate + diphosphate</text>
        <dbReference type="Rhea" id="RHEA:22328"/>
        <dbReference type="ChEBI" id="CHEBI:15378"/>
        <dbReference type="ChEBI" id="CHEBI:33019"/>
        <dbReference type="ChEBI" id="CHEBI:37575"/>
        <dbReference type="ChEBI" id="CHEBI:57841"/>
        <dbReference type="ChEBI" id="CHEBI:58296"/>
        <dbReference type="EC" id="2.5.1.3"/>
    </reaction>
</comment>
<comment type="cofactor">
    <cofactor evidence="1">
        <name>Mg(2+)</name>
        <dbReference type="ChEBI" id="CHEBI:18420"/>
    </cofactor>
    <text evidence="1">Binds 1 Mg(2+) ion per subunit.</text>
</comment>
<comment type="pathway">
    <text evidence="1">Cofactor biosynthesis; thiamine diphosphate biosynthesis; thiamine phosphate from 4-amino-2-methyl-5-diphosphomethylpyrimidine and 4-methyl-5-(2-phosphoethyl)-thiazole: step 1/1.</text>
</comment>
<comment type="similarity">
    <text evidence="1">Belongs to the thiamine-phosphate synthase family.</text>
</comment>
<protein>
    <recommendedName>
        <fullName evidence="1">Thiamine-phosphate synthase</fullName>
        <shortName evidence="1">TP synthase</shortName>
        <shortName evidence="1">TPS</shortName>
        <ecNumber evidence="1">2.5.1.3</ecNumber>
    </recommendedName>
    <alternativeName>
        <fullName evidence="1">Thiamine-phosphate pyrophosphorylase</fullName>
        <shortName evidence="1">TMP pyrophosphorylase</shortName>
        <shortName evidence="1">TMP-PPase</shortName>
    </alternativeName>
</protein>
<sequence length="214" mass="22615">MRAELAVYFIAGTQDIVRGTLPGVLEEALKAGITCFQYREKGAGSLQTASERKEMALECQQLCTKYQVPFIINDDVALALEIGADGIHVGQNDEEIRQVIASCAGKMKIGLSVHSVSEAEEAERLGAVDYIGVGPIFPTISKADAESVSGTAILEEIRRAGIKLPIVGIGGINETNSAEVLTAGADGVSVISAITRSDDCYSVIKQLKNPGYPS</sequence>
<proteinExistence type="inferred from homology"/>
<reference key="1">
    <citation type="journal article" date="2004" name="Nucleic Acids Res.">
        <title>Whole genome comparisons of serotype 4b and 1/2a strains of the food-borne pathogen Listeria monocytogenes reveal new insights into the core genome components of this species.</title>
        <authorList>
            <person name="Nelson K.E."/>
            <person name="Fouts D.E."/>
            <person name="Mongodin E.F."/>
            <person name="Ravel J."/>
            <person name="DeBoy R.T."/>
            <person name="Kolonay J.F."/>
            <person name="Rasko D.A."/>
            <person name="Angiuoli S.V."/>
            <person name="Gill S.R."/>
            <person name="Paulsen I.T."/>
            <person name="Peterson J.D."/>
            <person name="White O."/>
            <person name="Nelson W.C."/>
            <person name="Nierman W.C."/>
            <person name="Beanan M.J."/>
            <person name="Brinkac L.M."/>
            <person name="Daugherty S.C."/>
            <person name="Dodson R.J."/>
            <person name="Durkin A.S."/>
            <person name="Madupu R."/>
            <person name="Haft D.H."/>
            <person name="Selengut J."/>
            <person name="Van Aken S.E."/>
            <person name="Khouri H.M."/>
            <person name="Fedorova N."/>
            <person name="Forberger H.A."/>
            <person name="Tran B."/>
            <person name="Kathariou S."/>
            <person name="Wonderling L.D."/>
            <person name="Uhlich G.A."/>
            <person name="Bayles D.O."/>
            <person name="Luchansky J.B."/>
            <person name="Fraser C.M."/>
        </authorList>
    </citation>
    <scope>NUCLEOTIDE SEQUENCE [LARGE SCALE GENOMIC DNA]</scope>
    <source>
        <strain>F2365</strain>
    </source>
</reference>